<dbReference type="EC" id="3.6.1.66" evidence="1"/>
<dbReference type="EMBL" id="AL939114">
    <property type="protein sequence ID" value="CAB50983.1"/>
    <property type="molecule type" value="Genomic_DNA"/>
</dbReference>
<dbReference type="PIR" id="T36125">
    <property type="entry name" value="T36125"/>
</dbReference>
<dbReference type="RefSeq" id="NP_627128.1">
    <property type="nucleotide sequence ID" value="NC_003888.3"/>
</dbReference>
<dbReference type="SMR" id="Q9S2H9"/>
<dbReference type="FunCoup" id="Q9S2H9">
    <property type="interactions" value="373"/>
</dbReference>
<dbReference type="STRING" id="100226.gene:17760513"/>
<dbReference type="PaxDb" id="100226-SCO2902"/>
<dbReference type="KEGG" id="sco:SCO2902"/>
<dbReference type="PATRIC" id="fig|100226.15.peg.2961"/>
<dbReference type="eggNOG" id="COG0127">
    <property type="taxonomic scope" value="Bacteria"/>
</dbReference>
<dbReference type="HOGENOM" id="CLU_082080_0_1_11"/>
<dbReference type="InParanoid" id="Q9S2H9"/>
<dbReference type="OrthoDB" id="9807456at2"/>
<dbReference type="PhylomeDB" id="Q9S2H9"/>
<dbReference type="Proteomes" id="UP000001973">
    <property type="component" value="Chromosome"/>
</dbReference>
<dbReference type="GO" id="GO:0005737">
    <property type="term" value="C:cytoplasm"/>
    <property type="evidence" value="ECO:0000318"/>
    <property type="project" value="GO_Central"/>
</dbReference>
<dbReference type="GO" id="GO:0005829">
    <property type="term" value="C:cytosol"/>
    <property type="evidence" value="ECO:0000318"/>
    <property type="project" value="GO_Central"/>
</dbReference>
<dbReference type="GO" id="GO:0035870">
    <property type="term" value="F:dITP diphosphatase activity"/>
    <property type="evidence" value="ECO:0007669"/>
    <property type="project" value="RHEA"/>
</dbReference>
<dbReference type="GO" id="GO:0036220">
    <property type="term" value="F:ITP diphosphatase activity"/>
    <property type="evidence" value="ECO:0007669"/>
    <property type="project" value="UniProtKB-EC"/>
</dbReference>
<dbReference type="GO" id="GO:0046872">
    <property type="term" value="F:metal ion binding"/>
    <property type="evidence" value="ECO:0007669"/>
    <property type="project" value="UniProtKB-KW"/>
</dbReference>
<dbReference type="GO" id="GO:0047429">
    <property type="term" value="F:nucleoside triphosphate diphosphatase activity"/>
    <property type="evidence" value="ECO:0000318"/>
    <property type="project" value="GO_Central"/>
</dbReference>
<dbReference type="GO" id="GO:0000166">
    <property type="term" value="F:nucleotide binding"/>
    <property type="evidence" value="ECO:0007669"/>
    <property type="project" value="UniProtKB-KW"/>
</dbReference>
<dbReference type="GO" id="GO:0017111">
    <property type="term" value="F:ribonucleoside triphosphate phosphatase activity"/>
    <property type="evidence" value="ECO:0007669"/>
    <property type="project" value="InterPro"/>
</dbReference>
<dbReference type="GO" id="GO:0036222">
    <property type="term" value="F:XTP diphosphatase activity"/>
    <property type="evidence" value="ECO:0007669"/>
    <property type="project" value="RHEA"/>
</dbReference>
<dbReference type="GO" id="GO:0009143">
    <property type="term" value="P:nucleoside triphosphate catabolic process"/>
    <property type="evidence" value="ECO:0000318"/>
    <property type="project" value="GO_Central"/>
</dbReference>
<dbReference type="GO" id="GO:0009117">
    <property type="term" value="P:nucleotide metabolic process"/>
    <property type="evidence" value="ECO:0007669"/>
    <property type="project" value="UniProtKB-KW"/>
</dbReference>
<dbReference type="GO" id="GO:0009146">
    <property type="term" value="P:purine nucleoside triphosphate catabolic process"/>
    <property type="evidence" value="ECO:0007669"/>
    <property type="project" value="UniProtKB-UniRule"/>
</dbReference>
<dbReference type="CDD" id="cd00515">
    <property type="entry name" value="HAM1"/>
    <property type="match status" value="1"/>
</dbReference>
<dbReference type="FunFam" id="3.90.950.10:FF:000001">
    <property type="entry name" value="dITP/XTP pyrophosphatase"/>
    <property type="match status" value="1"/>
</dbReference>
<dbReference type="Gene3D" id="3.90.950.10">
    <property type="match status" value="1"/>
</dbReference>
<dbReference type="HAMAP" id="MF_01405">
    <property type="entry name" value="Non_canon_purine_NTPase"/>
    <property type="match status" value="1"/>
</dbReference>
<dbReference type="InterPro" id="IPR020922">
    <property type="entry name" value="dITP/XTP_pyrophosphatase"/>
</dbReference>
<dbReference type="InterPro" id="IPR029001">
    <property type="entry name" value="ITPase-like_fam"/>
</dbReference>
<dbReference type="InterPro" id="IPR002637">
    <property type="entry name" value="RdgB/HAM1"/>
</dbReference>
<dbReference type="NCBIfam" id="TIGR00042">
    <property type="entry name" value="RdgB/HAM1 family non-canonical purine NTP pyrophosphatase"/>
    <property type="match status" value="1"/>
</dbReference>
<dbReference type="PANTHER" id="PTHR11067:SF9">
    <property type="entry name" value="INOSINE TRIPHOSPHATE PYROPHOSPHATASE"/>
    <property type="match status" value="1"/>
</dbReference>
<dbReference type="PANTHER" id="PTHR11067">
    <property type="entry name" value="INOSINE TRIPHOSPHATE PYROPHOSPHATASE/HAM1 PROTEIN"/>
    <property type="match status" value="1"/>
</dbReference>
<dbReference type="Pfam" id="PF01725">
    <property type="entry name" value="Ham1p_like"/>
    <property type="match status" value="1"/>
</dbReference>
<dbReference type="SUPFAM" id="SSF52972">
    <property type="entry name" value="ITPase-like"/>
    <property type="match status" value="1"/>
</dbReference>
<proteinExistence type="inferred from homology"/>
<reference key="1">
    <citation type="journal article" date="2002" name="Nature">
        <title>Complete genome sequence of the model actinomycete Streptomyces coelicolor A3(2).</title>
        <authorList>
            <person name="Bentley S.D."/>
            <person name="Chater K.F."/>
            <person name="Cerdeno-Tarraga A.-M."/>
            <person name="Challis G.L."/>
            <person name="Thomson N.R."/>
            <person name="James K.D."/>
            <person name="Harris D.E."/>
            <person name="Quail M.A."/>
            <person name="Kieser H."/>
            <person name="Harper D."/>
            <person name="Bateman A."/>
            <person name="Brown S."/>
            <person name="Chandra G."/>
            <person name="Chen C.W."/>
            <person name="Collins M."/>
            <person name="Cronin A."/>
            <person name="Fraser A."/>
            <person name="Goble A."/>
            <person name="Hidalgo J."/>
            <person name="Hornsby T."/>
            <person name="Howarth S."/>
            <person name="Huang C.-H."/>
            <person name="Kieser T."/>
            <person name="Larke L."/>
            <person name="Murphy L.D."/>
            <person name="Oliver K."/>
            <person name="O'Neil S."/>
            <person name="Rabbinowitsch E."/>
            <person name="Rajandream M.A."/>
            <person name="Rutherford K.M."/>
            <person name="Rutter S."/>
            <person name="Seeger K."/>
            <person name="Saunders D."/>
            <person name="Sharp S."/>
            <person name="Squares R."/>
            <person name="Squares S."/>
            <person name="Taylor K."/>
            <person name="Warren T."/>
            <person name="Wietzorrek A."/>
            <person name="Woodward J.R."/>
            <person name="Barrell B.G."/>
            <person name="Parkhill J."/>
            <person name="Hopwood D.A."/>
        </authorList>
    </citation>
    <scope>NUCLEOTIDE SEQUENCE [LARGE SCALE GENOMIC DNA]</scope>
    <source>
        <strain>ATCC BAA-471 / A3(2) / M145</strain>
    </source>
</reference>
<gene>
    <name type="ordered locus">SCO2902</name>
    <name type="ORF">SCE19A.02c</name>
</gene>
<evidence type="ECO:0000255" key="1">
    <source>
        <dbReference type="HAMAP-Rule" id="MF_01405"/>
    </source>
</evidence>
<sequence length="200" mass="20890">MTRLILATRNAGKITELRAILADAGLPHDLVGADAYPHIPDVKETGVTFAENALLKAHALAEATGLPAVADDSGLCVDVLNGAPGIFSARWAGRHGDDQANLDLLLAQIADIADEHRGAHFACAAALALPDGTERVVEGQLKGTLRHAPAGTGGFGYDPILQPEGETRTCAELTAEEKNAISHRGKAFRALVPVVRELLG</sequence>
<protein>
    <recommendedName>
        <fullName evidence="1">dITP/XTP pyrophosphatase</fullName>
        <ecNumber evidence="1">3.6.1.66</ecNumber>
    </recommendedName>
    <alternativeName>
        <fullName evidence="1">Non-canonical purine NTP pyrophosphatase</fullName>
    </alternativeName>
    <alternativeName>
        <fullName evidence="1">Non-standard purine NTP pyrophosphatase</fullName>
    </alternativeName>
    <alternativeName>
        <fullName evidence="1">Nucleoside-triphosphate diphosphatase</fullName>
    </alternativeName>
    <alternativeName>
        <fullName evidence="1">Nucleoside-triphosphate pyrophosphatase</fullName>
        <shortName evidence="1">NTPase</shortName>
    </alternativeName>
</protein>
<name>IXTPA_STRCO</name>
<keyword id="KW-0378">Hydrolase</keyword>
<keyword id="KW-0460">Magnesium</keyword>
<keyword id="KW-0479">Metal-binding</keyword>
<keyword id="KW-0546">Nucleotide metabolism</keyword>
<keyword id="KW-0547">Nucleotide-binding</keyword>
<keyword id="KW-1185">Reference proteome</keyword>
<organism>
    <name type="scientific">Streptomyces coelicolor (strain ATCC BAA-471 / A3(2) / M145)</name>
    <dbReference type="NCBI Taxonomy" id="100226"/>
    <lineage>
        <taxon>Bacteria</taxon>
        <taxon>Bacillati</taxon>
        <taxon>Actinomycetota</taxon>
        <taxon>Actinomycetes</taxon>
        <taxon>Kitasatosporales</taxon>
        <taxon>Streptomycetaceae</taxon>
        <taxon>Streptomyces</taxon>
        <taxon>Streptomyces albidoflavus group</taxon>
    </lineage>
</organism>
<feature type="chain" id="PRO_0000178238" description="dITP/XTP pyrophosphatase">
    <location>
        <begin position="1"/>
        <end position="200"/>
    </location>
</feature>
<feature type="active site" description="Proton acceptor" evidence="1">
    <location>
        <position position="72"/>
    </location>
</feature>
<feature type="binding site" evidence="1">
    <location>
        <begin position="8"/>
        <end position="13"/>
    </location>
    <ligand>
        <name>substrate</name>
    </ligand>
</feature>
<feature type="binding site" evidence="1">
    <location>
        <position position="72"/>
    </location>
    <ligand>
        <name>Mg(2+)</name>
        <dbReference type="ChEBI" id="CHEBI:18420"/>
    </ligand>
</feature>
<feature type="binding site" evidence="1">
    <location>
        <position position="73"/>
    </location>
    <ligand>
        <name>substrate</name>
    </ligand>
</feature>
<feature type="binding site" evidence="1">
    <location>
        <begin position="155"/>
        <end position="158"/>
    </location>
    <ligand>
        <name>substrate</name>
    </ligand>
</feature>
<feature type="binding site" evidence="1">
    <location>
        <position position="178"/>
    </location>
    <ligand>
        <name>substrate</name>
    </ligand>
</feature>
<feature type="binding site" evidence="1">
    <location>
        <begin position="183"/>
        <end position="184"/>
    </location>
    <ligand>
        <name>substrate</name>
    </ligand>
</feature>
<accession>Q9S2H9</accession>
<comment type="function">
    <text evidence="1">Pyrophosphatase that catalyzes the hydrolysis of nucleoside triphosphates to their monophosphate derivatives, with a high preference for the non-canonical purine nucleotides XTP (xanthosine triphosphate), dITP (deoxyinosine triphosphate) and ITP. Seems to function as a house-cleaning enzyme that removes non-canonical purine nucleotides from the nucleotide pool, thus preventing their incorporation into DNA/RNA and avoiding chromosomal lesions.</text>
</comment>
<comment type="catalytic activity">
    <reaction evidence="1">
        <text>XTP + H2O = XMP + diphosphate + H(+)</text>
        <dbReference type="Rhea" id="RHEA:28610"/>
        <dbReference type="ChEBI" id="CHEBI:15377"/>
        <dbReference type="ChEBI" id="CHEBI:15378"/>
        <dbReference type="ChEBI" id="CHEBI:33019"/>
        <dbReference type="ChEBI" id="CHEBI:57464"/>
        <dbReference type="ChEBI" id="CHEBI:61314"/>
        <dbReference type="EC" id="3.6.1.66"/>
    </reaction>
</comment>
<comment type="catalytic activity">
    <reaction evidence="1">
        <text>dITP + H2O = dIMP + diphosphate + H(+)</text>
        <dbReference type="Rhea" id="RHEA:28342"/>
        <dbReference type="ChEBI" id="CHEBI:15377"/>
        <dbReference type="ChEBI" id="CHEBI:15378"/>
        <dbReference type="ChEBI" id="CHEBI:33019"/>
        <dbReference type="ChEBI" id="CHEBI:61194"/>
        <dbReference type="ChEBI" id="CHEBI:61382"/>
        <dbReference type="EC" id="3.6.1.66"/>
    </reaction>
</comment>
<comment type="catalytic activity">
    <reaction evidence="1">
        <text>ITP + H2O = IMP + diphosphate + H(+)</text>
        <dbReference type="Rhea" id="RHEA:29399"/>
        <dbReference type="ChEBI" id="CHEBI:15377"/>
        <dbReference type="ChEBI" id="CHEBI:15378"/>
        <dbReference type="ChEBI" id="CHEBI:33019"/>
        <dbReference type="ChEBI" id="CHEBI:58053"/>
        <dbReference type="ChEBI" id="CHEBI:61402"/>
        <dbReference type="EC" id="3.6.1.66"/>
    </reaction>
</comment>
<comment type="cofactor">
    <cofactor evidence="1">
        <name>Mg(2+)</name>
        <dbReference type="ChEBI" id="CHEBI:18420"/>
    </cofactor>
    <text evidence="1">Binds 1 Mg(2+) ion per subunit.</text>
</comment>
<comment type="subunit">
    <text evidence="1">Homodimer.</text>
</comment>
<comment type="similarity">
    <text evidence="1">Belongs to the HAM1 NTPase family.</text>
</comment>